<dbReference type="EMBL" id="AC092095">
    <property type="status" value="NOT_ANNOTATED_CDS"/>
    <property type="molecule type" value="Genomic_DNA"/>
</dbReference>
<dbReference type="EMBL" id="AC153912">
    <property type="status" value="NOT_ANNOTATED_CDS"/>
    <property type="molecule type" value="Genomic_DNA"/>
</dbReference>
<dbReference type="EMBL" id="BC066079">
    <property type="protein sequence ID" value="AAH66079.1"/>
    <property type="status" value="ALT_TERM"/>
    <property type="molecule type" value="mRNA"/>
</dbReference>
<dbReference type="EMBL" id="AK012378">
    <property type="protein sequence ID" value="BAB28200.1"/>
    <property type="molecule type" value="mRNA"/>
</dbReference>
<dbReference type="EMBL" id="AK018139">
    <property type="protein sequence ID" value="BAB31090.1"/>
    <property type="molecule type" value="mRNA"/>
</dbReference>
<dbReference type="EMBL" id="AK044134">
    <property type="protein sequence ID" value="BAC31794.2"/>
    <property type="status" value="ALT_INIT"/>
    <property type="molecule type" value="mRNA"/>
</dbReference>
<dbReference type="CCDS" id="CCDS35875.1"/>
<dbReference type="RefSeq" id="NP_080414.2">
    <property type="nucleotide sequence ID" value="NM_026138.2"/>
</dbReference>
<dbReference type="SMR" id="Q6NZL0"/>
<dbReference type="BioGRID" id="212169">
    <property type="interactions" value="12"/>
</dbReference>
<dbReference type="FunCoup" id="Q6NZL0">
    <property type="interactions" value="140"/>
</dbReference>
<dbReference type="IntAct" id="Q6NZL0">
    <property type="interactions" value="6"/>
</dbReference>
<dbReference type="STRING" id="10090.ENSMUSP00000090293"/>
<dbReference type="GlyGen" id="Q6NZL0">
    <property type="glycosylation" value="1 site"/>
</dbReference>
<dbReference type="iPTMnet" id="Q6NZL0"/>
<dbReference type="PhosphoSitePlus" id="Q6NZL0"/>
<dbReference type="SwissPalm" id="Q6NZL0"/>
<dbReference type="jPOST" id="Q6NZL0"/>
<dbReference type="PaxDb" id="10090-ENSMUSP00000090293"/>
<dbReference type="PeptideAtlas" id="Q6NZL0"/>
<dbReference type="ProteomicsDB" id="261601"/>
<dbReference type="Pumba" id="Q6NZL0"/>
<dbReference type="Ensembl" id="ENSMUST00000092629.4">
    <property type="protein sequence ID" value="ENSMUSP00000090293.3"/>
    <property type="gene ID" value="ENSMUSG00000038916.8"/>
</dbReference>
<dbReference type="GeneID" id="67412"/>
<dbReference type="KEGG" id="mmu:67412"/>
<dbReference type="UCSC" id="uc007est.1">
    <property type="organism name" value="mouse"/>
</dbReference>
<dbReference type="AGR" id="MGI:1914662"/>
<dbReference type="CTD" id="387104"/>
<dbReference type="MGI" id="MGI:1914662">
    <property type="gene designation" value="Mtcl3"/>
</dbReference>
<dbReference type="VEuPathDB" id="HostDB:ENSMUSG00000038916"/>
<dbReference type="eggNOG" id="KOG4787">
    <property type="taxonomic scope" value="Eukaryota"/>
</dbReference>
<dbReference type="GeneTree" id="ENSGT00950000182982"/>
<dbReference type="HOGENOM" id="CLU_013722_0_0_1"/>
<dbReference type="InParanoid" id="Q6NZL0"/>
<dbReference type="OMA" id="HMIDIRI"/>
<dbReference type="OrthoDB" id="10036174at2759"/>
<dbReference type="PhylomeDB" id="Q6NZL0"/>
<dbReference type="TreeFam" id="TF331853"/>
<dbReference type="BioGRID-ORCS" id="67412">
    <property type="hits" value="2 hits in 77 CRISPR screens"/>
</dbReference>
<dbReference type="CD-CODE" id="CE726F99">
    <property type="entry name" value="Postsynaptic density"/>
</dbReference>
<dbReference type="PRO" id="PR:Q6NZL0"/>
<dbReference type="Proteomes" id="UP000000589">
    <property type="component" value="Chromosome 10"/>
</dbReference>
<dbReference type="RNAct" id="Q6NZL0">
    <property type="molecule type" value="protein"/>
</dbReference>
<dbReference type="Bgee" id="ENSMUSG00000038916">
    <property type="expression patterns" value="Expressed in rostral migratory stream and 112 other cell types or tissues"/>
</dbReference>
<dbReference type="ExpressionAtlas" id="Q6NZL0">
    <property type="expression patterns" value="baseline and differential"/>
</dbReference>
<dbReference type="GO" id="GO:0005615">
    <property type="term" value="C:extracellular space"/>
    <property type="evidence" value="ECO:0007669"/>
    <property type="project" value="InterPro"/>
</dbReference>
<dbReference type="GO" id="GO:0016020">
    <property type="term" value="C:membrane"/>
    <property type="evidence" value="ECO:0007669"/>
    <property type="project" value="UniProtKB-SubCell"/>
</dbReference>
<dbReference type="GO" id="GO:0010506">
    <property type="term" value="P:regulation of autophagy"/>
    <property type="evidence" value="ECO:0007669"/>
    <property type="project" value="InterPro"/>
</dbReference>
<dbReference type="InterPro" id="IPR049885">
    <property type="entry name" value="MTCL1-3"/>
</dbReference>
<dbReference type="InterPro" id="IPR027881">
    <property type="entry name" value="SOGA_CC"/>
</dbReference>
<dbReference type="PANTHER" id="PTHR15742">
    <property type="entry name" value="GIRDIN"/>
    <property type="match status" value="1"/>
</dbReference>
<dbReference type="PANTHER" id="PTHR15742:SF2">
    <property type="entry name" value="PROTEIN SOGA3"/>
    <property type="match status" value="1"/>
</dbReference>
<dbReference type="Pfam" id="PF11365">
    <property type="entry name" value="SOGA"/>
    <property type="match status" value="2"/>
</dbReference>
<accession>Q6NZL0</accession>
<accession>Q8BLM2</accession>
<accession>Q9CSN3</accession>
<accession>Q9CU45</accession>
<sequence length="945" mass="103480">MSQPPSGGAAPAATSASAAAAATEARMHPEGCSRKQQRAQSPARPRDNSLRQTAGATRSPLGVGPKLNSVRQQQLQQQQQQGNKITGRSTSGTGSRGLGGGAEKAVPSIPKGAVPGAVQPAPGAEGSPAAILASVSFRRSGQPEEAPREIESGPSKVGEPPPLGGVGGGGEGGGAGGGPGDREGGAPQPPPPRGWRGKGVRATQRGSSVAEGVSPSPPTAATSKTPGPGSRNSGSGSTGSGSGGGGSYWKEGCLQSELIQFHLKKERAAAAAAAAQMHTKNGGGGSRSSPVAGAPAICEPLVVPSSSPMAAAAEGPQQSAEGNGSGGAMQAAAPPSSQPHSQQLQEQEDMQEEMEKLREENETLKNEIDELRTEMDEMRDTFFEEDACQLQEMRHELERANKNCRILQYRLRKAERKRLRYAQTGEIDGELLRSLEQDLKVAKDVSVRLHHELENVEEKRTTTEDENEKLRQQLIEVEIAKQALQNELEKMKELSLKRRGSKDLPKSEKKAQQTPTEDDNEDLKCQLQFVKEEAALMRKKMAKIDKEKDRFEHELQKYRSFYGDLDSPLPKGEAGGPPSTREAELKLRLRLVEEEANILGRKIVELEVENRGLKAELDDLRGEDFNGSSNPLMREQSESLSELRQHLQLVEDETELLRRNVADLEEQNKRITAELNKYKYKSSGHDSSRHHDNAKTEALQEELKAARLQINELSGKVMQLQYENRVLMSNMQRYDLASHLGIRGSPRDSDAESDAGKKESDDDSRPPHRKREGPIGGESDSEEVRNIRSLTPTRSFYPTPGPWPKSFSDRQQMKDIRSEAERLGKTIDRLIADTSTIITEARIYVANGDLFGLMDEEDDGSRIREHELLYRINAQMKAFRKELQTFIDRLEVPKSADDRGAEEPISVSQMFQPIILLILILVLFSSLSYTTIFKLVFLFTLFFVL</sequence>
<protein>
    <recommendedName>
        <fullName>Microtubule cross-linking factor 3</fullName>
    </recommendedName>
</protein>
<organism>
    <name type="scientific">Mus musculus</name>
    <name type="common">Mouse</name>
    <dbReference type="NCBI Taxonomy" id="10090"/>
    <lineage>
        <taxon>Eukaryota</taxon>
        <taxon>Metazoa</taxon>
        <taxon>Chordata</taxon>
        <taxon>Craniata</taxon>
        <taxon>Vertebrata</taxon>
        <taxon>Euteleostomi</taxon>
        <taxon>Mammalia</taxon>
        <taxon>Eutheria</taxon>
        <taxon>Euarchontoglires</taxon>
        <taxon>Glires</taxon>
        <taxon>Rodentia</taxon>
        <taxon>Myomorpha</taxon>
        <taxon>Muroidea</taxon>
        <taxon>Muridae</taxon>
        <taxon>Murinae</taxon>
        <taxon>Mus</taxon>
        <taxon>Mus</taxon>
    </lineage>
</organism>
<keyword id="KW-0175">Coiled coil</keyword>
<keyword id="KW-0472">Membrane</keyword>
<keyword id="KW-0597">Phosphoprotein</keyword>
<keyword id="KW-1185">Reference proteome</keyword>
<keyword id="KW-0732">Signal</keyword>
<keyword id="KW-0812">Transmembrane</keyword>
<keyword id="KW-1133">Transmembrane helix</keyword>
<proteinExistence type="evidence at protein level"/>
<name>MTCL3_MOUSE</name>
<reference key="1">
    <citation type="journal article" date="2009" name="PLoS Biol.">
        <title>Lineage-specific biology revealed by a finished genome assembly of the mouse.</title>
        <authorList>
            <person name="Church D.M."/>
            <person name="Goodstadt L."/>
            <person name="Hillier L.W."/>
            <person name="Zody M.C."/>
            <person name="Goldstein S."/>
            <person name="She X."/>
            <person name="Bult C.J."/>
            <person name="Agarwala R."/>
            <person name="Cherry J.L."/>
            <person name="DiCuccio M."/>
            <person name="Hlavina W."/>
            <person name="Kapustin Y."/>
            <person name="Meric P."/>
            <person name="Maglott D."/>
            <person name="Birtle Z."/>
            <person name="Marques A.C."/>
            <person name="Graves T."/>
            <person name="Zhou S."/>
            <person name="Teague B."/>
            <person name="Potamousis K."/>
            <person name="Churas C."/>
            <person name="Place M."/>
            <person name="Herschleb J."/>
            <person name="Runnheim R."/>
            <person name="Forrest D."/>
            <person name="Amos-Landgraf J."/>
            <person name="Schwartz D.C."/>
            <person name="Cheng Z."/>
            <person name="Lindblad-Toh K."/>
            <person name="Eichler E.E."/>
            <person name="Ponting C.P."/>
        </authorList>
    </citation>
    <scope>NUCLEOTIDE SEQUENCE [LARGE SCALE GENOMIC DNA]</scope>
    <source>
        <strain>C57BL/6J</strain>
    </source>
</reference>
<reference key="2">
    <citation type="journal article" date="2004" name="Genome Res.">
        <title>The status, quality, and expansion of the NIH full-length cDNA project: the Mammalian Gene Collection (MGC).</title>
        <authorList>
            <consortium name="The MGC Project Team"/>
        </authorList>
    </citation>
    <scope>NUCLEOTIDE SEQUENCE [LARGE SCALE MRNA] OF 1-912</scope>
    <source>
        <strain>C57BL/6J</strain>
        <tissue>Brain</tissue>
    </source>
</reference>
<reference key="3">
    <citation type="journal article" date="2005" name="Science">
        <title>The transcriptional landscape of the mammalian genome.</title>
        <authorList>
            <person name="Carninci P."/>
            <person name="Kasukawa T."/>
            <person name="Katayama S."/>
            <person name="Gough J."/>
            <person name="Frith M.C."/>
            <person name="Maeda N."/>
            <person name="Oyama R."/>
            <person name="Ravasi T."/>
            <person name="Lenhard B."/>
            <person name="Wells C."/>
            <person name="Kodzius R."/>
            <person name="Shimokawa K."/>
            <person name="Bajic V.B."/>
            <person name="Brenner S.E."/>
            <person name="Batalov S."/>
            <person name="Forrest A.R."/>
            <person name="Zavolan M."/>
            <person name="Davis M.J."/>
            <person name="Wilming L.G."/>
            <person name="Aidinis V."/>
            <person name="Allen J.E."/>
            <person name="Ambesi-Impiombato A."/>
            <person name="Apweiler R."/>
            <person name="Aturaliya R.N."/>
            <person name="Bailey T.L."/>
            <person name="Bansal M."/>
            <person name="Baxter L."/>
            <person name="Beisel K.W."/>
            <person name="Bersano T."/>
            <person name="Bono H."/>
            <person name="Chalk A.M."/>
            <person name="Chiu K.P."/>
            <person name="Choudhary V."/>
            <person name="Christoffels A."/>
            <person name="Clutterbuck D.R."/>
            <person name="Crowe M.L."/>
            <person name="Dalla E."/>
            <person name="Dalrymple B.P."/>
            <person name="de Bono B."/>
            <person name="Della Gatta G."/>
            <person name="di Bernardo D."/>
            <person name="Down T."/>
            <person name="Engstrom P."/>
            <person name="Fagiolini M."/>
            <person name="Faulkner G."/>
            <person name="Fletcher C.F."/>
            <person name="Fukushima T."/>
            <person name="Furuno M."/>
            <person name="Futaki S."/>
            <person name="Gariboldi M."/>
            <person name="Georgii-Hemming P."/>
            <person name="Gingeras T.R."/>
            <person name="Gojobori T."/>
            <person name="Green R.E."/>
            <person name="Gustincich S."/>
            <person name="Harbers M."/>
            <person name="Hayashi Y."/>
            <person name="Hensch T.K."/>
            <person name="Hirokawa N."/>
            <person name="Hill D."/>
            <person name="Huminiecki L."/>
            <person name="Iacono M."/>
            <person name="Ikeo K."/>
            <person name="Iwama A."/>
            <person name="Ishikawa T."/>
            <person name="Jakt M."/>
            <person name="Kanapin A."/>
            <person name="Katoh M."/>
            <person name="Kawasawa Y."/>
            <person name="Kelso J."/>
            <person name="Kitamura H."/>
            <person name="Kitano H."/>
            <person name="Kollias G."/>
            <person name="Krishnan S.P."/>
            <person name="Kruger A."/>
            <person name="Kummerfeld S.K."/>
            <person name="Kurochkin I.V."/>
            <person name="Lareau L.F."/>
            <person name="Lazarevic D."/>
            <person name="Lipovich L."/>
            <person name="Liu J."/>
            <person name="Liuni S."/>
            <person name="McWilliam S."/>
            <person name="Madan Babu M."/>
            <person name="Madera M."/>
            <person name="Marchionni L."/>
            <person name="Matsuda H."/>
            <person name="Matsuzawa S."/>
            <person name="Miki H."/>
            <person name="Mignone F."/>
            <person name="Miyake S."/>
            <person name="Morris K."/>
            <person name="Mottagui-Tabar S."/>
            <person name="Mulder N."/>
            <person name="Nakano N."/>
            <person name="Nakauchi H."/>
            <person name="Ng P."/>
            <person name="Nilsson R."/>
            <person name="Nishiguchi S."/>
            <person name="Nishikawa S."/>
            <person name="Nori F."/>
            <person name="Ohara O."/>
            <person name="Okazaki Y."/>
            <person name="Orlando V."/>
            <person name="Pang K.C."/>
            <person name="Pavan W.J."/>
            <person name="Pavesi G."/>
            <person name="Pesole G."/>
            <person name="Petrovsky N."/>
            <person name="Piazza S."/>
            <person name="Reed J."/>
            <person name="Reid J.F."/>
            <person name="Ring B.Z."/>
            <person name="Ringwald M."/>
            <person name="Rost B."/>
            <person name="Ruan Y."/>
            <person name="Salzberg S.L."/>
            <person name="Sandelin A."/>
            <person name="Schneider C."/>
            <person name="Schoenbach C."/>
            <person name="Sekiguchi K."/>
            <person name="Semple C.A."/>
            <person name="Seno S."/>
            <person name="Sessa L."/>
            <person name="Sheng Y."/>
            <person name="Shibata Y."/>
            <person name="Shimada H."/>
            <person name="Shimada K."/>
            <person name="Silva D."/>
            <person name="Sinclair B."/>
            <person name="Sperling S."/>
            <person name="Stupka E."/>
            <person name="Sugiura K."/>
            <person name="Sultana R."/>
            <person name="Takenaka Y."/>
            <person name="Taki K."/>
            <person name="Tammoja K."/>
            <person name="Tan S.L."/>
            <person name="Tang S."/>
            <person name="Taylor M.S."/>
            <person name="Tegner J."/>
            <person name="Teichmann S.A."/>
            <person name="Ueda H.R."/>
            <person name="van Nimwegen E."/>
            <person name="Verardo R."/>
            <person name="Wei C.L."/>
            <person name="Yagi K."/>
            <person name="Yamanishi H."/>
            <person name="Zabarovsky E."/>
            <person name="Zhu S."/>
            <person name="Zimmer A."/>
            <person name="Hide W."/>
            <person name="Bult C."/>
            <person name="Grimmond S.M."/>
            <person name="Teasdale R.D."/>
            <person name="Liu E.T."/>
            <person name="Brusic V."/>
            <person name="Quackenbush J."/>
            <person name="Wahlestedt C."/>
            <person name="Mattick J.S."/>
            <person name="Hume D.A."/>
            <person name="Kai C."/>
            <person name="Sasaki D."/>
            <person name="Tomaru Y."/>
            <person name="Fukuda S."/>
            <person name="Kanamori-Katayama M."/>
            <person name="Suzuki M."/>
            <person name="Aoki J."/>
            <person name="Arakawa T."/>
            <person name="Iida J."/>
            <person name="Imamura K."/>
            <person name="Itoh M."/>
            <person name="Kato T."/>
            <person name="Kawaji H."/>
            <person name="Kawagashira N."/>
            <person name="Kawashima T."/>
            <person name="Kojima M."/>
            <person name="Kondo S."/>
            <person name="Konno H."/>
            <person name="Nakano K."/>
            <person name="Ninomiya N."/>
            <person name="Nishio T."/>
            <person name="Okada M."/>
            <person name="Plessy C."/>
            <person name="Shibata K."/>
            <person name="Shiraki T."/>
            <person name="Suzuki S."/>
            <person name="Tagami M."/>
            <person name="Waki K."/>
            <person name="Watahiki A."/>
            <person name="Okamura-Oho Y."/>
            <person name="Suzuki H."/>
            <person name="Kawai J."/>
            <person name="Hayashizaki Y."/>
        </authorList>
    </citation>
    <scope>NUCLEOTIDE SEQUENCE [LARGE SCALE MRNA] OF 205-945</scope>
    <source>
        <strain>C57BL/6J</strain>
        <tissue>Brain cortex</tissue>
        <tissue>Embryo</tissue>
        <tissue>Medulla oblongata</tissue>
    </source>
</reference>
<reference key="4">
    <citation type="journal article" date="2010" name="Cell">
        <title>A tissue-specific atlas of mouse protein phosphorylation and expression.</title>
        <authorList>
            <person name="Huttlin E.L."/>
            <person name="Jedrychowski M.P."/>
            <person name="Elias J.E."/>
            <person name="Goswami T."/>
            <person name="Rad R."/>
            <person name="Beausoleil S.A."/>
            <person name="Villen J."/>
            <person name="Haas W."/>
            <person name="Sowa M.E."/>
            <person name="Gygi S.P."/>
        </authorList>
    </citation>
    <scope>PHOSPHORYLATION [LARGE SCALE ANALYSIS] AT SER-567 AND SER-779</scope>
    <scope>IDENTIFICATION BY MASS SPECTROMETRY [LARGE SCALE ANALYSIS]</scope>
    <source>
        <tissue>Brain</tissue>
    </source>
</reference>
<feature type="signal peptide" evidence="1">
    <location>
        <begin position="1"/>
        <end position="25"/>
    </location>
</feature>
<feature type="chain" id="PRO_0000271353" description="Microtubule cross-linking factor 3">
    <location>
        <begin position="26"/>
        <end position="945"/>
    </location>
</feature>
<feature type="transmembrane region" description="Helical" evidence="1">
    <location>
        <begin position="913"/>
        <end position="933"/>
    </location>
</feature>
<feature type="region of interest" description="Disordered" evidence="2">
    <location>
        <begin position="1"/>
        <end position="250"/>
    </location>
</feature>
<feature type="region of interest" description="Disordered" evidence="2">
    <location>
        <begin position="265"/>
        <end position="293"/>
    </location>
</feature>
<feature type="region of interest" description="Disordered" evidence="2">
    <location>
        <begin position="307"/>
        <end position="366"/>
    </location>
</feature>
<feature type="region of interest" description="Disordered" evidence="2">
    <location>
        <begin position="494"/>
        <end position="522"/>
    </location>
</feature>
<feature type="region of interest" description="Disordered" evidence="2">
    <location>
        <begin position="741"/>
        <end position="811"/>
    </location>
</feature>
<feature type="coiled-coil region" evidence="1">
    <location>
        <begin position="340"/>
        <end position="724"/>
    </location>
</feature>
<feature type="coiled-coil region" evidence="1">
    <location>
        <begin position="809"/>
        <end position="833"/>
    </location>
</feature>
<feature type="compositionally biased region" description="Low complexity" evidence="2">
    <location>
        <begin position="1"/>
        <end position="23"/>
    </location>
</feature>
<feature type="compositionally biased region" description="Low complexity" evidence="2">
    <location>
        <begin position="72"/>
        <end position="93"/>
    </location>
</feature>
<feature type="compositionally biased region" description="Low complexity" evidence="2">
    <location>
        <begin position="110"/>
        <end position="126"/>
    </location>
</feature>
<feature type="compositionally biased region" description="Basic and acidic residues" evidence="2">
    <location>
        <begin position="141"/>
        <end position="151"/>
    </location>
</feature>
<feature type="compositionally biased region" description="Gly residues" evidence="2">
    <location>
        <begin position="164"/>
        <end position="179"/>
    </location>
</feature>
<feature type="compositionally biased region" description="Low complexity" evidence="2">
    <location>
        <begin position="219"/>
        <end position="235"/>
    </location>
</feature>
<feature type="compositionally biased region" description="Gly residues" evidence="2">
    <location>
        <begin position="236"/>
        <end position="247"/>
    </location>
</feature>
<feature type="compositionally biased region" description="Low complexity" evidence="2">
    <location>
        <begin position="328"/>
        <end position="345"/>
    </location>
</feature>
<feature type="compositionally biased region" description="Basic and acidic residues" evidence="2">
    <location>
        <begin position="353"/>
        <end position="366"/>
    </location>
</feature>
<feature type="compositionally biased region" description="Basic and acidic residues" evidence="2">
    <location>
        <begin position="494"/>
        <end position="511"/>
    </location>
</feature>
<feature type="compositionally biased region" description="Basic and acidic residues" evidence="2">
    <location>
        <begin position="745"/>
        <end position="766"/>
    </location>
</feature>
<feature type="modified residue" description="Phosphoserine" evidence="4">
    <location>
        <position position="567"/>
    </location>
</feature>
<feature type="modified residue" description="Phosphoserine" evidence="4">
    <location>
        <position position="779"/>
    </location>
</feature>
<feature type="sequence conflict" description="In Ref. 2; BAB31090." evidence="3" ref="2">
    <original>Q</original>
    <variation>K</variation>
    <location>
        <position position="719"/>
    </location>
</feature>
<gene>
    <name type="primary">Mtcl3</name>
    <name type="synonym">Soga3</name>
</gene>
<comment type="subcellular location">
    <subcellularLocation>
        <location evidence="3">Membrane</location>
        <topology evidence="3">Single-pass membrane protein</topology>
    </subcellularLocation>
</comment>
<comment type="similarity">
    <text evidence="3">Belongs to the MTCL family.</text>
</comment>
<comment type="sequence caution" evidence="3">
    <conflict type="erroneous termination">
        <sequence resource="EMBL-CDS" id="AAH66079"/>
    </conflict>
    <text>Truncated C-terminus.</text>
</comment>
<comment type="sequence caution" evidence="3">
    <conflict type="erroneous initiation">
        <sequence resource="EMBL-CDS" id="BAC31794"/>
    </conflict>
    <text>Truncated N-terminus.</text>
</comment>
<evidence type="ECO:0000255" key="1"/>
<evidence type="ECO:0000256" key="2">
    <source>
        <dbReference type="SAM" id="MobiDB-lite"/>
    </source>
</evidence>
<evidence type="ECO:0000305" key="3"/>
<evidence type="ECO:0007744" key="4">
    <source>
    </source>
</evidence>